<evidence type="ECO:0000250" key="1">
    <source>
        <dbReference type="UniProtKB" id="P87377"/>
    </source>
</evidence>
<evidence type="ECO:0000255" key="2">
    <source>
        <dbReference type="PROSITE-ProRule" id="PRU00201"/>
    </source>
</evidence>
<evidence type="ECO:0000256" key="3">
    <source>
        <dbReference type="SAM" id="MobiDB-lite"/>
    </source>
</evidence>
<evidence type="ECO:0000312" key="4">
    <source>
        <dbReference type="EMBL" id="AAK00596.1"/>
    </source>
</evidence>
<accession>Q98UD2</accession>
<sequence>MRNCCRERGFSVGCLEPETSFSCASDVKPSPDMDSVSSQDSLYLPNSIGASLQDQDLWSQFHQEGTEMIITKSGRRMFPQCKIRLFGLHLYAKYMLLVDFVPLDNFRYKWNKNQWEAAGKAEPHPPCRTYVHPDSPASGAHWMKDPICFQKLKLTNNTLDQQGHIILHSMHRYKPRFHVVQSDDMYNSPWGLVQVFSFPETEFTAVTAYQNEKITKLKINHNPFAKGFREQERSHKRDDVLRTLQQSPGKRQKRKKWEDSPEADISDFPKATRVKEESVMDPAVVYQNWVSDHEANQGLTPHSPESEGVNQEQQVPTSSLNFYNKSQHRSSQHLSSPYDLGEPSSRRLTPDVATVPDSDQDSLAVLHGIPTQDSAQERTCSMNISMETPVKQPLRGTIYSSYGTEQWMVPAQGQYQPVGYTAYQTDLSTQGAVAHQHSGMSDWSQYSLFPYSCW</sequence>
<feature type="chain" id="PRO_0000390493" description="T-box protein VegT">
    <location>
        <begin position="1"/>
        <end position="454"/>
    </location>
</feature>
<feature type="DNA-binding region" description="T-box" evidence="2">
    <location>
        <begin position="57"/>
        <end position="230"/>
    </location>
</feature>
<feature type="region of interest" description="Disordered" evidence="3">
    <location>
        <begin position="229"/>
        <end position="274"/>
    </location>
</feature>
<feature type="region of interest" description="Disordered" evidence="3">
    <location>
        <begin position="295"/>
        <end position="358"/>
    </location>
</feature>
<feature type="compositionally biased region" description="Basic and acidic residues" evidence="3">
    <location>
        <begin position="229"/>
        <end position="241"/>
    </location>
</feature>
<feature type="compositionally biased region" description="Polar residues" evidence="3">
    <location>
        <begin position="308"/>
        <end position="325"/>
    </location>
</feature>
<organism>
    <name type="scientific">Xenopus borealis</name>
    <name type="common">Kenyan clawed frog</name>
    <dbReference type="NCBI Taxonomy" id="8354"/>
    <lineage>
        <taxon>Eukaryota</taxon>
        <taxon>Metazoa</taxon>
        <taxon>Chordata</taxon>
        <taxon>Craniata</taxon>
        <taxon>Vertebrata</taxon>
        <taxon>Euteleostomi</taxon>
        <taxon>Amphibia</taxon>
        <taxon>Batrachia</taxon>
        <taxon>Anura</taxon>
        <taxon>Pipoidea</taxon>
        <taxon>Pipidae</taxon>
        <taxon>Xenopodinae</taxon>
        <taxon>Xenopus</taxon>
        <taxon>Xenopus</taxon>
    </lineage>
</organism>
<protein>
    <recommendedName>
        <fullName evidence="1 4">T-box protein VegT</fullName>
    </recommendedName>
</protein>
<comment type="function">
    <text evidence="1">Transcription factor required for both mesoderm and endoderm formation in the embryo; signaling determinants and concentration levels may determine which germ layer is formed. Acts together with beta-catenin to activate genes that are responsible for mesoderm induction including wnt-8, eomes t/bra, siamois, mix1 and sox17. Directly binds to promoter DNA. Patterns the mesoderm along the dorsoventral and posterior axis. Activates siamois gene transcription when alone or in combination with beta-catenin, but inhibits siamois transcription in combination with pou5f1.1/oct-25 (By similarity).</text>
</comment>
<comment type="subunit">
    <text evidence="1">Forms a repression complex on the promoters of the nodal/nr1 and siamois genes with the maternal factors tcf7l1/tcf3 and pouf5.1/oct-25. Interacts (via C-terminus) with tcf7l1/tcf3 (via N-terminus). Also interacts with the other POU-domain transcription factors pou5f1.2/oct-91 and pou5f1.3/oct-60 (By similarity).</text>
</comment>
<comment type="subcellular location">
    <subcellularLocation>
        <location evidence="1 2">Nucleus</location>
    </subcellularLocation>
</comment>
<name>VEGT_XENBO</name>
<keyword id="KW-0010">Activator</keyword>
<keyword id="KW-0217">Developmental protein</keyword>
<keyword id="KW-0238">DNA-binding</keyword>
<keyword id="KW-0539">Nucleus</keyword>
<keyword id="KW-0804">Transcription</keyword>
<keyword id="KW-0805">Transcription regulation</keyword>
<gene>
    <name evidence="4" type="primary">vegt</name>
</gene>
<reference evidence="4" key="1">
    <citation type="submission" date="1999-08" db="EMBL/GenBank/DDBJ databases">
        <title>Characterization of the RNA signal that directs vegetal localization of VegT, the primary germ layer determinant in Xenopus.</title>
        <authorList>
            <person name="Bubunenko M."/>
            <person name="Vempati U.D."/>
            <person name="King M.L."/>
        </authorList>
    </citation>
    <scope>NUCLEOTIDE SEQUENCE [MRNA]</scope>
</reference>
<dbReference type="EMBL" id="AF180351">
    <property type="protein sequence ID" value="AAK00596.1"/>
    <property type="molecule type" value="mRNA"/>
</dbReference>
<dbReference type="SMR" id="Q98UD2"/>
<dbReference type="GO" id="GO:0000785">
    <property type="term" value="C:chromatin"/>
    <property type="evidence" value="ECO:0007669"/>
    <property type="project" value="TreeGrafter"/>
</dbReference>
<dbReference type="GO" id="GO:0005634">
    <property type="term" value="C:nucleus"/>
    <property type="evidence" value="ECO:0007669"/>
    <property type="project" value="UniProtKB-SubCell"/>
</dbReference>
<dbReference type="GO" id="GO:0000981">
    <property type="term" value="F:DNA-binding transcription factor activity, RNA polymerase II-specific"/>
    <property type="evidence" value="ECO:0007669"/>
    <property type="project" value="TreeGrafter"/>
</dbReference>
<dbReference type="GO" id="GO:0000978">
    <property type="term" value="F:RNA polymerase II cis-regulatory region sequence-specific DNA binding"/>
    <property type="evidence" value="ECO:0007669"/>
    <property type="project" value="InterPro"/>
</dbReference>
<dbReference type="GO" id="GO:0001708">
    <property type="term" value="P:cell fate specification"/>
    <property type="evidence" value="ECO:0007669"/>
    <property type="project" value="TreeGrafter"/>
</dbReference>
<dbReference type="GO" id="GO:0045893">
    <property type="term" value="P:positive regulation of DNA-templated transcription"/>
    <property type="evidence" value="ECO:0007669"/>
    <property type="project" value="InterPro"/>
</dbReference>
<dbReference type="CDD" id="cd20197">
    <property type="entry name" value="T-box_VegT-like"/>
    <property type="match status" value="1"/>
</dbReference>
<dbReference type="FunFam" id="2.60.40.820:FF:000007">
    <property type="entry name" value="T-box transcription factor"/>
    <property type="match status" value="1"/>
</dbReference>
<dbReference type="Gene3D" id="2.60.40.820">
    <property type="entry name" value="Transcription factor, T-box"/>
    <property type="match status" value="1"/>
</dbReference>
<dbReference type="InterPro" id="IPR008967">
    <property type="entry name" value="p53-like_TF_DNA-bd_sf"/>
</dbReference>
<dbReference type="InterPro" id="IPR046360">
    <property type="entry name" value="T-box_DNA-bd"/>
</dbReference>
<dbReference type="InterPro" id="IPR036960">
    <property type="entry name" value="T-box_sf"/>
</dbReference>
<dbReference type="InterPro" id="IPR001699">
    <property type="entry name" value="TF_T-box"/>
</dbReference>
<dbReference type="InterPro" id="IPR018186">
    <property type="entry name" value="TF_T-box_CS"/>
</dbReference>
<dbReference type="PANTHER" id="PTHR11267:SF200">
    <property type="entry name" value="MGA, MAX DIMERIZATION PROTEIN"/>
    <property type="match status" value="1"/>
</dbReference>
<dbReference type="PANTHER" id="PTHR11267">
    <property type="entry name" value="T-BOX PROTEIN-RELATED"/>
    <property type="match status" value="1"/>
</dbReference>
<dbReference type="Pfam" id="PF00907">
    <property type="entry name" value="T-box"/>
    <property type="match status" value="1"/>
</dbReference>
<dbReference type="PRINTS" id="PR00937">
    <property type="entry name" value="TBOX"/>
</dbReference>
<dbReference type="SMART" id="SM00425">
    <property type="entry name" value="TBOX"/>
    <property type="match status" value="1"/>
</dbReference>
<dbReference type="SUPFAM" id="SSF49417">
    <property type="entry name" value="p53-like transcription factors"/>
    <property type="match status" value="1"/>
</dbReference>
<dbReference type="PROSITE" id="PS01283">
    <property type="entry name" value="TBOX_1"/>
    <property type="match status" value="1"/>
</dbReference>
<dbReference type="PROSITE" id="PS01264">
    <property type="entry name" value="TBOX_2"/>
    <property type="match status" value="1"/>
</dbReference>
<dbReference type="PROSITE" id="PS50252">
    <property type="entry name" value="TBOX_3"/>
    <property type="match status" value="1"/>
</dbReference>
<proteinExistence type="evidence at transcript level"/>